<organism>
    <name type="scientific">Methanopyrus kandleri (strain AV19 / DSM 6324 / JCM 9639 / NBRC 100938)</name>
    <dbReference type="NCBI Taxonomy" id="190192"/>
    <lineage>
        <taxon>Archaea</taxon>
        <taxon>Methanobacteriati</taxon>
        <taxon>Methanobacteriota</taxon>
        <taxon>Methanomada group</taxon>
        <taxon>Methanopyri</taxon>
        <taxon>Methanopyrales</taxon>
        <taxon>Methanopyraceae</taxon>
        <taxon>Methanopyrus</taxon>
    </lineage>
</organism>
<evidence type="ECO:0000255" key="1">
    <source>
        <dbReference type="HAMAP-Rule" id="MF_00407"/>
    </source>
</evidence>
<gene>
    <name evidence="1" type="primary">lig</name>
    <name type="ordered locus">MK0999</name>
</gene>
<comment type="function">
    <text evidence="1">DNA ligase that seals nicks in double-stranded DNA during DNA replication, DNA recombination and DNA repair.</text>
</comment>
<comment type="catalytic activity">
    <reaction evidence="1">
        <text>ATP + (deoxyribonucleotide)n-3'-hydroxyl + 5'-phospho-(deoxyribonucleotide)m = (deoxyribonucleotide)n+m + AMP + diphosphate.</text>
        <dbReference type="EC" id="6.5.1.1"/>
    </reaction>
</comment>
<comment type="cofactor">
    <cofactor evidence="1">
        <name>Mg(2+)</name>
        <dbReference type="ChEBI" id="CHEBI:18420"/>
    </cofactor>
</comment>
<comment type="similarity">
    <text evidence="1">Belongs to the ATP-dependent DNA ligase family.</text>
</comment>
<sequence length="559" mass="63337">MYYSSLAEAFERLERISSRKAKISLIAQFLRQCPEDVVDTVALFLANQVFPGWDPRDLGIGSKLMRKVIATATGSTDSEVTELFKRLGDLGLTAEELLKRRKTSTLLDSRPLMVGEVRETFEKIAEVEGEGAVKRKMRLMMGLLARAKPKEARYLVRQALSELRTGVRESTVEEAIAQAFGVSRKLVERAHMLSNDLGLVAKVAMTKGEEGLREIDLRPMRPIKPMLAQAARNVKEALAEVGGKGAVEIKLDGARVQVHSDGEEVRVYTRRIEDVTHALPDIVEAVKDCVDADEFILEGEAVAINPETGKPRPFQELLHRIKRKYDIEEVRKEIPVELHLFDCLYVDGESLVDTPFRERRRRLEEIVREREGEVMLVEQVITDDPKEAAEMFHRALEMGHEGVMVKDLDANYTPGVRGKKMLKVKPVLETLDCVVIGGIWGKGKRKGLIGSYLLAVWDENKENLLEVGKVGTGMDDETLERLTKMFEDLIVEESGREVRFKPEVVFEVEFEDIQKSPKYSSGFALRFPRLVRVRDDLGPEDADTIEKVRRIYEEVLQKH</sequence>
<accession>Q8TWN3</accession>
<name>DNLI_METKA</name>
<keyword id="KW-0067">ATP-binding</keyword>
<keyword id="KW-0131">Cell cycle</keyword>
<keyword id="KW-0132">Cell division</keyword>
<keyword id="KW-0227">DNA damage</keyword>
<keyword id="KW-0233">DNA recombination</keyword>
<keyword id="KW-0234">DNA repair</keyword>
<keyword id="KW-0235">DNA replication</keyword>
<keyword id="KW-0436">Ligase</keyword>
<keyword id="KW-0460">Magnesium</keyword>
<keyword id="KW-0479">Metal-binding</keyword>
<keyword id="KW-0547">Nucleotide-binding</keyword>
<keyword id="KW-1185">Reference proteome</keyword>
<proteinExistence type="inferred from homology"/>
<protein>
    <recommendedName>
        <fullName evidence="1">DNA ligase</fullName>
        <ecNumber evidence="1">6.5.1.1</ecNumber>
    </recommendedName>
    <alternativeName>
        <fullName evidence="1">Polydeoxyribonucleotide synthase [ATP]</fullName>
    </alternativeName>
</protein>
<reference key="1">
    <citation type="journal article" date="2002" name="Proc. Natl. Acad. Sci. U.S.A.">
        <title>The complete genome of hyperthermophile Methanopyrus kandleri AV19 and monophyly of archaeal methanogens.</title>
        <authorList>
            <person name="Slesarev A.I."/>
            <person name="Mezhevaya K.V."/>
            <person name="Makarova K.S."/>
            <person name="Polushin N.N."/>
            <person name="Shcherbinina O.V."/>
            <person name="Shakhova V.V."/>
            <person name="Belova G.I."/>
            <person name="Aravind L."/>
            <person name="Natale D.A."/>
            <person name="Rogozin I.B."/>
            <person name="Tatusov R.L."/>
            <person name="Wolf Y.I."/>
            <person name="Stetter K.O."/>
            <person name="Malykh A.G."/>
            <person name="Koonin E.V."/>
            <person name="Kozyavkin S.A."/>
        </authorList>
    </citation>
    <scope>NUCLEOTIDE SEQUENCE [LARGE SCALE GENOMIC DNA]</scope>
    <source>
        <strain>AV19 / DSM 6324 / JCM 9639 / NBRC 100938</strain>
    </source>
</reference>
<feature type="chain" id="PRO_0000059605" description="DNA ligase">
    <location>
        <begin position="1"/>
        <end position="559"/>
    </location>
</feature>
<feature type="active site" description="N6-AMP-lysine intermediate" evidence="1">
    <location>
        <position position="250"/>
    </location>
</feature>
<feature type="binding site" evidence="1">
    <location>
        <position position="248"/>
    </location>
    <ligand>
        <name>ATP</name>
        <dbReference type="ChEBI" id="CHEBI:30616"/>
    </ligand>
</feature>
<feature type="binding site" evidence="1">
    <location>
        <position position="255"/>
    </location>
    <ligand>
        <name>ATP</name>
        <dbReference type="ChEBI" id="CHEBI:30616"/>
    </ligand>
</feature>
<feature type="binding site" evidence="1">
    <location>
        <position position="270"/>
    </location>
    <ligand>
        <name>ATP</name>
        <dbReference type="ChEBI" id="CHEBI:30616"/>
    </ligand>
</feature>
<feature type="binding site" evidence="1">
    <location>
        <position position="300"/>
    </location>
    <ligand>
        <name>ATP</name>
        <dbReference type="ChEBI" id="CHEBI:30616"/>
    </ligand>
</feature>
<feature type="binding site" evidence="1">
    <location>
        <position position="341"/>
    </location>
    <ligand>
        <name>ATP</name>
        <dbReference type="ChEBI" id="CHEBI:30616"/>
    </ligand>
</feature>
<feature type="binding site" evidence="1">
    <location>
        <position position="417"/>
    </location>
    <ligand>
        <name>ATP</name>
        <dbReference type="ChEBI" id="CHEBI:30616"/>
    </ligand>
</feature>
<feature type="binding site" evidence="1">
    <location>
        <position position="423"/>
    </location>
    <ligand>
        <name>ATP</name>
        <dbReference type="ChEBI" id="CHEBI:30616"/>
    </ligand>
</feature>
<dbReference type="EC" id="6.5.1.1" evidence="1"/>
<dbReference type="EMBL" id="AE009439">
    <property type="protein sequence ID" value="AAM02212.1"/>
    <property type="molecule type" value="Genomic_DNA"/>
</dbReference>
<dbReference type="SMR" id="Q8TWN3"/>
<dbReference type="FunCoup" id="Q8TWN3">
    <property type="interactions" value="139"/>
</dbReference>
<dbReference type="STRING" id="190192.MK0999"/>
<dbReference type="PaxDb" id="190192-MK0999"/>
<dbReference type="EnsemblBacteria" id="AAM02212">
    <property type="protein sequence ID" value="AAM02212"/>
    <property type="gene ID" value="MK0999"/>
</dbReference>
<dbReference type="KEGG" id="mka:MK0999"/>
<dbReference type="PATRIC" id="fig|190192.8.peg.1047"/>
<dbReference type="HOGENOM" id="CLU_005138_6_0_2"/>
<dbReference type="InParanoid" id="Q8TWN3"/>
<dbReference type="OrthoDB" id="31274at2157"/>
<dbReference type="Proteomes" id="UP000001826">
    <property type="component" value="Chromosome"/>
</dbReference>
<dbReference type="GO" id="GO:0005524">
    <property type="term" value="F:ATP binding"/>
    <property type="evidence" value="ECO:0007669"/>
    <property type="project" value="UniProtKB-UniRule"/>
</dbReference>
<dbReference type="GO" id="GO:0003677">
    <property type="term" value="F:DNA binding"/>
    <property type="evidence" value="ECO:0007669"/>
    <property type="project" value="InterPro"/>
</dbReference>
<dbReference type="GO" id="GO:0003910">
    <property type="term" value="F:DNA ligase (ATP) activity"/>
    <property type="evidence" value="ECO:0007669"/>
    <property type="project" value="UniProtKB-UniRule"/>
</dbReference>
<dbReference type="GO" id="GO:0046872">
    <property type="term" value="F:metal ion binding"/>
    <property type="evidence" value="ECO:0007669"/>
    <property type="project" value="UniProtKB-KW"/>
</dbReference>
<dbReference type="GO" id="GO:0051301">
    <property type="term" value="P:cell division"/>
    <property type="evidence" value="ECO:0007669"/>
    <property type="project" value="UniProtKB-KW"/>
</dbReference>
<dbReference type="GO" id="GO:0071897">
    <property type="term" value="P:DNA biosynthetic process"/>
    <property type="evidence" value="ECO:0007669"/>
    <property type="project" value="InterPro"/>
</dbReference>
<dbReference type="GO" id="GO:0006310">
    <property type="term" value="P:DNA recombination"/>
    <property type="evidence" value="ECO:0007669"/>
    <property type="project" value="UniProtKB-UniRule"/>
</dbReference>
<dbReference type="GO" id="GO:0006281">
    <property type="term" value="P:DNA repair"/>
    <property type="evidence" value="ECO:0007669"/>
    <property type="project" value="UniProtKB-UniRule"/>
</dbReference>
<dbReference type="GO" id="GO:0006273">
    <property type="term" value="P:lagging strand elongation"/>
    <property type="evidence" value="ECO:0007669"/>
    <property type="project" value="TreeGrafter"/>
</dbReference>
<dbReference type="CDD" id="cd07901">
    <property type="entry name" value="Adenylation_DNA_ligase_Arch_LigB"/>
    <property type="match status" value="1"/>
</dbReference>
<dbReference type="CDD" id="cd07972">
    <property type="entry name" value="OBF_DNA_ligase_Arch_LigB"/>
    <property type="match status" value="1"/>
</dbReference>
<dbReference type="FunFam" id="1.10.3260.10:FF:000007">
    <property type="entry name" value="DNA ligase"/>
    <property type="match status" value="1"/>
</dbReference>
<dbReference type="FunFam" id="3.30.470.30:FF:000012">
    <property type="entry name" value="Probable DNA ligase"/>
    <property type="match status" value="1"/>
</dbReference>
<dbReference type="Gene3D" id="1.10.3260.10">
    <property type="entry name" value="DNA ligase, ATP-dependent, N-terminal domain"/>
    <property type="match status" value="1"/>
</dbReference>
<dbReference type="Gene3D" id="3.30.470.30">
    <property type="entry name" value="DNA ligase/mRNA capping enzyme"/>
    <property type="match status" value="1"/>
</dbReference>
<dbReference type="Gene3D" id="2.40.50.140">
    <property type="entry name" value="Nucleic acid-binding proteins"/>
    <property type="match status" value="1"/>
</dbReference>
<dbReference type="HAMAP" id="MF_00407">
    <property type="entry name" value="DNA_ligase"/>
    <property type="match status" value="1"/>
</dbReference>
<dbReference type="InterPro" id="IPR050191">
    <property type="entry name" value="ATP-dep_DNA_ligase"/>
</dbReference>
<dbReference type="InterPro" id="IPR022865">
    <property type="entry name" value="DNA_ligae_ATP-dep_bac/arc"/>
</dbReference>
<dbReference type="InterPro" id="IPR000977">
    <property type="entry name" value="DNA_ligase_ATP-dep"/>
</dbReference>
<dbReference type="InterPro" id="IPR012309">
    <property type="entry name" value="DNA_ligase_ATP-dep_C"/>
</dbReference>
<dbReference type="InterPro" id="IPR012310">
    <property type="entry name" value="DNA_ligase_ATP-dep_cent"/>
</dbReference>
<dbReference type="InterPro" id="IPR016059">
    <property type="entry name" value="DNA_ligase_ATP-dep_CS"/>
</dbReference>
<dbReference type="InterPro" id="IPR012308">
    <property type="entry name" value="DNA_ligase_ATP-dep_N"/>
</dbReference>
<dbReference type="InterPro" id="IPR036599">
    <property type="entry name" value="DNA_ligase_N_sf"/>
</dbReference>
<dbReference type="InterPro" id="IPR012340">
    <property type="entry name" value="NA-bd_OB-fold"/>
</dbReference>
<dbReference type="NCBIfam" id="TIGR00574">
    <property type="entry name" value="dnl1"/>
    <property type="match status" value="1"/>
</dbReference>
<dbReference type="PANTHER" id="PTHR45674:SF7">
    <property type="entry name" value="DNA LIGASE"/>
    <property type="match status" value="1"/>
</dbReference>
<dbReference type="PANTHER" id="PTHR45674">
    <property type="entry name" value="DNA LIGASE 1/3 FAMILY MEMBER"/>
    <property type="match status" value="1"/>
</dbReference>
<dbReference type="Pfam" id="PF04679">
    <property type="entry name" value="DNA_ligase_A_C"/>
    <property type="match status" value="1"/>
</dbReference>
<dbReference type="Pfam" id="PF01068">
    <property type="entry name" value="DNA_ligase_A_M"/>
    <property type="match status" value="1"/>
</dbReference>
<dbReference type="Pfam" id="PF04675">
    <property type="entry name" value="DNA_ligase_A_N"/>
    <property type="match status" value="1"/>
</dbReference>
<dbReference type="SUPFAM" id="SSF117018">
    <property type="entry name" value="ATP-dependent DNA ligase DNA-binding domain"/>
    <property type="match status" value="1"/>
</dbReference>
<dbReference type="SUPFAM" id="SSF56091">
    <property type="entry name" value="DNA ligase/mRNA capping enzyme, catalytic domain"/>
    <property type="match status" value="1"/>
</dbReference>
<dbReference type="SUPFAM" id="SSF50249">
    <property type="entry name" value="Nucleic acid-binding proteins"/>
    <property type="match status" value="1"/>
</dbReference>
<dbReference type="PROSITE" id="PS00697">
    <property type="entry name" value="DNA_LIGASE_A1"/>
    <property type="match status" value="1"/>
</dbReference>
<dbReference type="PROSITE" id="PS00333">
    <property type="entry name" value="DNA_LIGASE_A2"/>
    <property type="match status" value="1"/>
</dbReference>
<dbReference type="PROSITE" id="PS50160">
    <property type="entry name" value="DNA_LIGASE_A3"/>
    <property type="match status" value="1"/>
</dbReference>